<accession>P73265</accession>
<feature type="chain" id="PRO_0000092649" description="Nitrate import ATP-binding protein NrtD">
    <location>
        <begin position="1"/>
        <end position="266"/>
    </location>
</feature>
<feature type="domain" description="ABC transporter" evidence="2">
    <location>
        <begin position="3"/>
        <end position="234"/>
    </location>
</feature>
<feature type="binding site" evidence="2">
    <location>
        <begin position="39"/>
        <end position="46"/>
    </location>
    <ligand>
        <name>ATP</name>
        <dbReference type="ChEBI" id="CHEBI:30616"/>
    </ligand>
</feature>
<proteinExistence type="inferred from homology"/>
<protein>
    <recommendedName>
        <fullName evidence="3">Nitrate import ATP-binding protein NrtD</fullName>
        <ecNumber evidence="1">7.3.2.4</ecNumber>
    </recommendedName>
</protein>
<name>NRTD_SYNY3</name>
<reference key="1">
    <citation type="journal article" date="1996" name="DNA Res.">
        <title>Sequence analysis of the genome of the unicellular cyanobacterium Synechocystis sp. strain PCC6803. II. Sequence determination of the entire genome and assignment of potential protein-coding regions.</title>
        <authorList>
            <person name="Kaneko T."/>
            <person name="Sato S."/>
            <person name="Kotani H."/>
            <person name="Tanaka A."/>
            <person name="Asamizu E."/>
            <person name="Nakamura Y."/>
            <person name="Miyajima N."/>
            <person name="Hirosawa M."/>
            <person name="Sugiura M."/>
            <person name="Sasamoto S."/>
            <person name="Kimura T."/>
            <person name="Hosouchi T."/>
            <person name="Matsuno A."/>
            <person name="Muraki A."/>
            <person name="Nakazaki N."/>
            <person name="Naruo K."/>
            <person name="Okumura S."/>
            <person name="Shimpo S."/>
            <person name="Takeuchi C."/>
            <person name="Wada T."/>
            <person name="Watanabe A."/>
            <person name="Yamada M."/>
            <person name="Yasuda M."/>
            <person name="Tabata S."/>
        </authorList>
    </citation>
    <scope>NUCLEOTIDE SEQUENCE [LARGE SCALE GENOMIC DNA]</scope>
    <source>
        <strain>ATCC 27184 / PCC 6803 / Kazusa</strain>
    </source>
</reference>
<keyword id="KW-0067">ATP-binding</keyword>
<keyword id="KW-0997">Cell inner membrane</keyword>
<keyword id="KW-1003">Cell membrane</keyword>
<keyword id="KW-0406">Ion transport</keyword>
<keyword id="KW-0472">Membrane</keyword>
<keyword id="KW-0534">Nitrate assimilation</keyword>
<keyword id="KW-0547">Nucleotide-binding</keyword>
<keyword id="KW-1185">Reference proteome</keyword>
<keyword id="KW-1278">Translocase</keyword>
<keyword id="KW-0813">Transport</keyword>
<sequence>MHLEITDLNRVFVGKRGSVVALKNINMHIETGEFVCAVGASGSGKSTLLRLIAGLDTPTSGTINVDGQRVTGPGADRGMVFQHYSLFPWMTVRQNVEFGLKLQGCSQKERFDTASYYLDVVGLINFSEAYPRELSGGMKQRVAIARSLACHPKVLLMDEPFGALDIQTKERMHEYLIDIWQRLQCSILMITHDVEEAVFLAQRVYVLSSRPGTIQRELTINLPGDEETPKNRTYKIKREPEFFKYSDEISSLLRGRETEETEAIAS</sequence>
<evidence type="ECO:0000250" key="1">
    <source>
        <dbReference type="UniProtKB" id="P38046"/>
    </source>
</evidence>
<evidence type="ECO:0000255" key="2">
    <source>
        <dbReference type="PROSITE-ProRule" id="PRU00434"/>
    </source>
</evidence>
<evidence type="ECO:0000305" key="3"/>
<organism>
    <name type="scientific">Synechocystis sp. (strain ATCC 27184 / PCC 6803 / Kazusa)</name>
    <dbReference type="NCBI Taxonomy" id="1111708"/>
    <lineage>
        <taxon>Bacteria</taxon>
        <taxon>Bacillati</taxon>
        <taxon>Cyanobacteriota</taxon>
        <taxon>Cyanophyceae</taxon>
        <taxon>Synechococcales</taxon>
        <taxon>Merismopediaceae</taxon>
        <taxon>Synechocystis</taxon>
    </lineage>
</organism>
<dbReference type="EC" id="7.3.2.4" evidence="1"/>
<dbReference type="EMBL" id="BA000022">
    <property type="protein sequence ID" value="BAA17293.1"/>
    <property type="molecule type" value="Genomic_DNA"/>
</dbReference>
<dbReference type="PIR" id="S77446">
    <property type="entry name" value="S77446"/>
</dbReference>
<dbReference type="SMR" id="P73265"/>
<dbReference type="FunCoup" id="P73265">
    <property type="interactions" value="203"/>
</dbReference>
<dbReference type="STRING" id="1148.gene:10498156"/>
<dbReference type="PaxDb" id="1148-1652371"/>
<dbReference type="EnsemblBacteria" id="BAA17293">
    <property type="protein sequence ID" value="BAA17293"/>
    <property type="gene ID" value="BAA17293"/>
</dbReference>
<dbReference type="KEGG" id="syn:sll1082"/>
<dbReference type="eggNOG" id="COG1116">
    <property type="taxonomic scope" value="Bacteria"/>
</dbReference>
<dbReference type="InParanoid" id="P73265"/>
<dbReference type="PhylomeDB" id="P73265"/>
<dbReference type="Proteomes" id="UP000001425">
    <property type="component" value="Chromosome"/>
</dbReference>
<dbReference type="GO" id="GO:0005886">
    <property type="term" value="C:plasma membrane"/>
    <property type="evidence" value="ECO:0007669"/>
    <property type="project" value="UniProtKB-SubCell"/>
</dbReference>
<dbReference type="GO" id="GO:0015414">
    <property type="term" value="F:ABC-type nitrate transporter activity"/>
    <property type="evidence" value="ECO:0007669"/>
    <property type="project" value="UniProtKB-EC"/>
</dbReference>
<dbReference type="GO" id="GO:0005524">
    <property type="term" value="F:ATP binding"/>
    <property type="evidence" value="ECO:0007669"/>
    <property type="project" value="UniProtKB-KW"/>
</dbReference>
<dbReference type="GO" id="GO:0016887">
    <property type="term" value="F:ATP hydrolysis activity"/>
    <property type="evidence" value="ECO:0007669"/>
    <property type="project" value="InterPro"/>
</dbReference>
<dbReference type="GO" id="GO:0042128">
    <property type="term" value="P:nitrate assimilation"/>
    <property type="evidence" value="ECO:0007669"/>
    <property type="project" value="UniProtKB-KW"/>
</dbReference>
<dbReference type="CDD" id="cd03293">
    <property type="entry name" value="ABC_NrtD_SsuB_transporters"/>
    <property type="match status" value="1"/>
</dbReference>
<dbReference type="Gene3D" id="3.40.50.300">
    <property type="entry name" value="P-loop containing nucleotide triphosphate hydrolases"/>
    <property type="match status" value="1"/>
</dbReference>
<dbReference type="InterPro" id="IPR003593">
    <property type="entry name" value="AAA+_ATPase"/>
</dbReference>
<dbReference type="InterPro" id="IPR003439">
    <property type="entry name" value="ABC_transporter-like_ATP-bd"/>
</dbReference>
<dbReference type="InterPro" id="IPR017871">
    <property type="entry name" value="ABC_transporter-like_CS"/>
</dbReference>
<dbReference type="InterPro" id="IPR050166">
    <property type="entry name" value="ABC_transporter_ATP-bind"/>
</dbReference>
<dbReference type="InterPro" id="IPR027417">
    <property type="entry name" value="P-loop_NTPase"/>
</dbReference>
<dbReference type="PANTHER" id="PTHR42788:SF13">
    <property type="entry name" value="ALIPHATIC SULFONATES IMPORT ATP-BINDING PROTEIN SSUB"/>
    <property type="match status" value="1"/>
</dbReference>
<dbReference type="PANTHER" id="PTHR42788">
    <property type="entry name" value="TAURINE IMPORT ATP-BINDING PROTEIN-RELATED"/>
    <property type="match status" value="1"/>
</dbReference>
<dbReference type="Pfam" id="PF00005">
    <property type="entry name" value="ABC_tran"/>
    <property type="match status" value="1"/>
</dbReference>
<dbReference type="SMART" id="SM00382">
    <property type="entry name" value="AAA"/>
    <property type="match status" value="1"/>
</dbReference>
<dbReference type="SUPFAM" id="SSF52540">
    <property type="entry name" value="P-loop containing nucleoside triphosphate hydrolases"/>
    <property type="match status" value="1"/>
</dbReference>
<dbReference type="PROSITE" id="PS00211">
    <property type="entry name" value="ABC_TRANSPORTER_1"/>
    <property type="match status" value="1"/>
</dbReference>
<dbReference type="PROSITE" id="PS50893">
    <property type="entry name" value="ABC_TRANSPORTER_2"/>
    <property type="match status" value="1"/>
</dbReference>
<gene>
    <name type="primary">nrtD</name>
    <name type="ordered locus">sll1082</name>
</gene>
<comment type="function">
    <text evidence="1">Part of the ABC transporter complex NrtABCD involved in nitrate uptake. The complex is probably also involved in nitrite transport. Probably responsible for energy coupling to the transport system.</text>
</comment>
<comment type="catalytic activity">
    <reaction evidence="1">
        <text>nitrate(out) + ATP + H2O = nitrate(in) + ADP + phosphate + H(+)</text>
        <dbReference type="Rhea" id="RHEA:13181"/>
        <dbReference type="ChEBI" id="CHEBI:15377"/>
        <dbReference type="ChEBI" id="CHEBI:15378"/>
        <dbReference type="ChEBI" id="CHEBI:17632"/>
        <dbReference type="ChEBI" id="CHEBI:30616"/>
        <dbReference type="ChEBI" id="CHEBI:43474"/>
        <dbReference type="ChEBI" id="CHEBI:456216"/>
        <dbReference type="EC" id="7.3.2.4"/>
    </reaction>
</comment>
<comment type="subunit">
    <text evidence="1">The complex is composed of two ATP-binding proteins (NrtC and NrtD), two transmembrane proteins (NrtB) and a solute-binding protein (NrtA).</text>
</comment>
<comment type="subcellular location">
    <subcellularLocation>
        <location evidence="1">Cell inner membrane</location>
        <topology evidence="1">Peripheral membrane protein</topology>
        <orientation evidence="1">Cytoplasmic side</orientation>
    </subcellularLocation>
</comment>
<comment type="similarity">
    <text evidence="3">Belongs to the ABC transporter superfamily. Nitrate/nitrite/cyanate uptake transporter (NitT) (TC 3.A.1.16) family.</text>
</comment>